<proteinExistence type="inferred from homology"/>
<organism>
    <name type="scientific">Synechococcus sp. (strain CC9311)</name>
    <dbReference type="NCBI Taxonomy" id="64471"/>
    <lineage>
        <taxon>Bacteria</taxon>
        <taxon>Bacillati</taxon>
        <taxon>Cyanobacteriota</taxon>
        <taxon>Cyanophyceae</taxon>
        <taxon>Synechococcales</taxon>
        <taxon>Synechococcaceae</taxon>
        <taxon>Synechococcus</taxon>
    </lineage>
</organism>
<comment type="function">
    <text evidence="1">Catalyzes the ATP-dependent conversion of 7-carboxy-7-deazaguanine (CDG) to 7-cyano-7-deazaguanine (preQ(0)).</text>
</comment>
<comment type="catalytic activity">
    <reaction evidence="1">
        <text>7-carboxy-7-deazaguanine + NH4(+) + ATP = 7-cyano-7-deazaguanine + ADP + phosphate + H2O + H(+)</text>
        <dbReference type="Rhea" id="RHEA:27982"/>
        <dbReference type="ChEBI" id="CHEBI:15377"/>
        <dbReference type="ChEBI" id="CHEBI:15378"/>
        <dbReference type="ChEBI" id="CHEBI:28938"/>
        <dbReference type="ChEBI" id="CHEBI:30616"/>
        <dbReference type="ChEBI" id="CHEBI:43474"/>
        <dbReference type="ChEBI" id="CHEBI:45075"/>
        <dbReference type="ChEBI" id="CHEBI:61036"/>
        <dbReference type="ChEBI" id="CHEBI:456216"/>
        <dbReference type="EC" id="6.3.4.20"/>
    </reaction>
</comment>
<comment type="cofactor">
    <cofactor evidence="1">
        <name>Zn(2+)</name>
        <dbReference type="ChEBI" id="CHEBI:29105"/>
    </cofactor>
    <text evidence="1">Binds 1 zinc ion per subunit.</text>
</comment>
<comment type="pathway">
    <text evidence="1">Purine metabolism; 7-cyano-7-deazaguanine biosynthesis.</text>
</comment>
<comment type="similarity">
    <text evidence="1">Belongs to the QueC family.</text>
</comment>
<comment type="sequence caution" evidence="2">
    <conflict type="erroneous initiation">
        <sequence resource="EMBL-CDS" id="ABI46236"/>
    </conflict>
</comment>
<dbReference type="EC" id="6.3.4.20" evidence="1"/>
<dbReference type="EMBL" id="CP000435">
    <property type="protein sequence ID" value="ABI46236.1"/>
    <property type="status" value="ALT_INIT"/>
    <property type="molecule type" value="Genomic_DNA"/>
</dbReference>
<dbReference type="RefSeq" id="WP_041427151.1">
    <property type="nucleotide sequence ID" value="NC_008319.1"/>
</dbReference>
<dbReference type="SMR" id="Q0I671"/>
<dbReference type="STRING" id="64471.sync_2864"/>
<dbReference type="KEGG" id="syg:sync_2864"/>
<dbReference type="eggNOG" id="COG0603">
    <property type="taxonomic scope" value="Bacteria"/>
</dbReference>
<dbReference type="HOGENOM" id="CLU_081854_1_0_3"/>
<dbReference type="OrthoDB" id="9789567at2"/>
<dbReference type="UniPathway" id="UPA00391"/>
<dbReference type="Proteomes" id="UP000001961">
    <property type="component" value="Chromosome"/>
</dbReference>
<dbReference type="GO" id="GO:0005524">
    <property type="term" value="F:ATP binding"/>
    <property type="evidence" value="ECO:0007669"/>
    <property type="project" value="UniProtKB-UniRule"/>
</dbReference>
<dbReference type="GO" id="GO:0016879">
    <property type="term" value="F:ligase activity, forming carbon-nitrogen bonds"/>
    <property type="evidence" value="ECO:0007669"/>
    <property type="project" value="UniProtKB-UniRule"/>
</dbReference>
<dbReference type="GO" id="GO:0008270">
    <property type="term" value="F:zinc ion binding"/>
    <property type="evidence" value="ECO:0007669"/>
    <property type="project" value="UniProtKB-UniRule"/>
</dbReference>
<dbReference type="GO" id="GO:0008616">
    <property type="term" value="P:queuosine biosynthetic process"/>
    <property type="evidence" value="ECO:0007669"/>
    <property type="project" value="UniProtKB-UniRule"/>
</dbReference>
<dbReference type="CDD" id="cd01995">
    <property type="entry name" value="QueC-like"/>
    <property type="match status" value="1"/>
</dbReference>
<dbReference type="Gene3D" id="3.40.50.620">
    <property type="entry name" value="HUPs"/>
    <property type="match status" value="1"/>
</dbReference>
<dbReference type="HAMAP" id="MF_01633">
    <property type="entry name" value="QueC"/>
    <property type="match status" value="1"/>
</dbReference>
<dbReference type="InterPro" id="IPR018317">
    <property type="entry name" value="QueC"/>
</dbReference>
<dbReference type="InterPro" id="IPR014729">
    <property type="entry name" value="Rossmann-like_a/b/a_fold"/>
</dbReference>
<dbReference type="NCBIfam" id="TIGR00364">
    <property type="entry name" value="7-cyano-7-deazaguanine synthase QueC"/>
    <property type="match status" value="1"/>
</dbReference>
<dbReference type="PANTHER" id="PTHR42914">
    <property type="entry name" value="7-CYANO-7-DEAZAGUANINE SYNTHASE"/>
    <property type="match status" value="1"/>
</dbReference>
<dbReference type="PANTHER" id="PTHR42914:SF1">
    <property type="entry name" value="7-CYANO-7-DEAZAGUANINE SYNTHASE"/>
    <property type="match status" value="1"/>
</dbReference>
<dbReference type="Pfam" id="PF06508">
    <property type="entry name" value="QueC"/>
    <property type="match status" value="1"/>
</dbReference>
<dbReference type="PIRSF" id="PIRSF006293">
    <property type="entry name" value="ExsB"/>
    <property type="match status" value="1"/>
</dbReference>
<dbReference type="SUPFAM" id="SSF52402">
    <property type="entry name" value="Adenine nucleotide alpha hydrolases-like"/>
    <property type="match status" value="1"/>
</dbReference>
<feature type="chain" id="PRO_0000336959" description="7-cyano-7-deazaguanine synthase">
    <location>
        <begin position="1"/>
        <end position="226"/>
    </location>
</feature>
<feature type="binding site" evidence="1">
    <location>
        <begin position="10"/>
        <end position="20"/>
    </location>
    <ligand>
        <name>ATP</name>
        <dbReference type="ChEBI" id="CHEBI:30616"/>
    </ligand>
</feature>
<feature type="binding site" evidence="1">
    <location>
        <position position="191"/>
    </location>
    <ligand>
        <name>Zn(2+)</name>
        <dbReference type="ChEBI" id="CHEBI:29105"/>
    </ligand>
</feature>
<feature type="binding site" evidence="1">
    <location>
        <position position="199"/>
    </location>
    <ligand>
        <name>Zn(2+)</name>
        <dbReference type="ChEBI" id="CHEBI:29105"/>
    </ligand>
</feature>
<feature type="binding site" evidence="1">
    <location>
        <position position="202"/>
    </location>
    <ligand>
        <name>Zn(2+)</name>
        <dbReference type="ChEBI" id="CHEBI:29105"/>
    </ligand>
</feature>
<feature type="binding site" evidence="1">
    <location>
        <position position="205"/>
    </location>
    <ligand>
        <name>Zn(2+)</name>
        <dbReference type="ChEBI" id="CHEBI:29105"/>
    </ligand>
</feature>
<reference key="1">
    <citation type="journal article" date="2006" name="Proc. Natl. Acad. Sci. U.S.A.">
        <title>Genome sequence of Synechococcus CC9311: insights into adaptation to a coastal environment.</title>
        <authorList>
            <person name="Palenik B."/>
            <person name="Ren Q."/>
            <person name="Dupont C.L."/>
            <person name="Myers G.S."/>
            <person name="Heidelberg J.F."/>
            <person name="Badger J.H."/>
            <person name="Madupu R."/>
            <person name="Nelson W.C."/>
            <person name="Brinkac L.M."/>
            <person name="Dodson R.J."/>
            <person name="Durkin A.S."/>
            <person name="Daugherty S.C."/>
            <person name="Sullivan S.A."/>
            <person name="Khouri H."/>
            <person name="Mohamoud Y."/>
            <person name="Halpin R."/>
            <person name="Paulsen I.T."/>
        </authorList>
    </citation>
    <scope>NUCLEOTIDE SEQUENCE [LARGE SCALE GENOMIC DNA]</scope>
    <source>
        <strain>CC9311</strain>
    </source>
</reference>
<sequence>MTDSTAIALLSGGLDSATAAALAIKSGFRVIGLSFDYGQRHRRELDAAVEIAKALNLAEHHTINVDLAMWGGSSLTDHAQTLPTSGVETSIIPNTYVPGRNTVFIAIGLSLAEARGADRLVLGVNAVDYSGYPDCRPDYLEAFQDLADLSSRAGREGHGPKLWAPLVEWSKQQIAEEALHLGIPIERTWSCYSGGDVPCGVCDSCRIRDEALLAAGRPDLCSPGRP</sequence>
<accession>Q0I671</accession>
<keyword id="KW-0067">ATP-binding</keyword>
<keyword id="KW-0436">Ligase</keyword>
<keyword id="KW-0479">Metal-binding</keyword>
<keyword id="KW-0547">Nucleotide-binding</keyword>
<keyword id="KW-0671">Queuosine biosynthesis</keyword>
<keyword id="KW-1185">Reference proteome</keyword>
<keyword id="KW-0862">Zinc</keyword>
<name>QUEC_SYNS3</name>
<protein>
    <recommendedName>
        <fullName evidence="1">7-cyano-7-deazaguanine synthase</fullName>
        <ecNumber evidence="1">6.3.4.20</ecNumber>
    </recommendedName>
    <alternativeName>
        <fullName evidence="1">7-cyano-7-carbaguanine synthase</fullName>
    </alternativeName>
    <alternativeName>
        <fullName evidence="1">PreQ(0) synthase</fullName>
    </alternativeName>
    <alternativeName>
        <fullName evidence="1">Queuosine biosynthesis protein QueC</fullName>
    </alternativeName>
</protein>
<evidence type="ECO:0000255" key="1">
    <source>
        <dbReference type="HAMAP-Rule" id="MF_01633"/>
    </source>
</evidence>
<evidence type="ECO:0000305" key="2"/>
<gene>
    <name evidence="1" type="primary">queC</name>
    <name type="ordered locus">sync_2864</name>
</gene>